<keyword id="KW-1185">Reference proteome</keyword>
<keyword id="KW-0687">Ribonucleoprotein</keyword>
<keyword id="KW-0689">Ribosomal protein</keyword>
<proteinExistence type="inferred from homology"/>
<evidence type="ECO:0000255" key="1">
    <source>
        <dbReference type="HAMAP-Rule" id="MF_00340"/>
    </source>
</evidence>
<evidence type="ECO:0000256" key="2">
    <source>
        <dbReference type="SAM" id="MobiDB-lite"/>
    </source>
</evidence>
<evidence type="ECO:0000305" key="3"/>
<name>RL32_RIPO1</name>
<sequence>MAVPKKKTSKTKRDQRKANWKHQAALEAQKALSLGKSILTGRSTFVYPQDEAEDEDE</sequence>
<dbReference type="EMBL" id="CP001287">
    <property type="protein sequence ID" value="ACK66695.1"/>
    <property type="molecule type" value="Genomic_DNA"/>
</dbReference>
<dbReference type="RefSeq" id="WP_012595962.1">
    <property type="nucleotide sequence ID" value="NC_011726.1"/>
</dbReference>
<dbReference type="SMR" id="B7K5G2"/>
<dbReference type="STRING" id="41431.PCC8801_2694"/>
<dbReference type="KEGG" id="cyp:PCC8801_2694"/>
<dbReference type="eggNOG" id="COG0333">
    <property type="taxonomic scope" value="Bacteria"/>
</dbReference>
<dbReference type="HOGENOM" id="CLU_199882_0_0_3"/>
<dbReference type="OrthoDB" id="541730at2"/>
<dbReference type="Proteomes" id="UP000008204">
    <property type="component" value="Chromosome"/>
</dbReference>
<dbReference type="GO" id="GO:0015934">
    <property type="term" value="C:large ribosomal subunit"/>
    <property type="evidence" value="ECO:0007669"/>
    <property type="project" value="InterPro"/>
</dbReference>
<dbReference type="GO" id="GO:0003735">
    <property type="term" value="F:structural constituent of ribosome"/>
    <property type="evidence" value="ECO:0007669"/>
    <property type="project" value="InterPro"/>
</dbReference>
<dbReference type="GO" id="GO:0006412">
    <property type="term" value="P:translation"/>
    <property type="evidence" value="ECO:0007669"/>
    <property type="project" value="UniProtKB-UniRule"/>
</dbReference>
<dbReference type="Gene3D" id="1.20.5.640">
    <property type="entry name" value="Single helix bin"/>
    <property type="match status" value="1"/>
</dbReference>
<dbReference type="HAMAP" id="MF_00340">
    <property type="entry name" value="Ribosomal_bL32"/>
    <property type="match status" value="1"/>
</dbReference>
<dbReference type="InterPro" id="IPR002677">
    <property type="entry name" value="Ribosomal_bL32"/>
</dbReference>
<dbReference type="InterPro" id="IPR044958">
    <property type="entry name" value="Ribosomal_bL32_plant/cyanobact"/>
</dbReference>
<dbReference type="InterPro" id="IPR011332">
    <property type="entry name" value="Ribosomal_zn-bd"/>
</dbReference>
<dbReference type="NCBIfam" id="TIGR01031">
    <property type="entry name" value="rpmF_bact"/>
    <property type="match status" value="1"/>
</dbReference>
<dbReference type="PANTHER" id="PTHR36083">
    <property type="entry name" value="50S RIBOSOMAL PROTEIN L32, CHLOROPLASTIC"/>
    <property type="match status" value="1"/>
</dbReference>
<dbReference type="PANTHER" id="PTHR36083:SF1">
    <property type="entry name" value="LARGE RIBOSOMAL SUBUNIT PROTEIN BL32C"/>
    <property type="match status" value="1"/>
</dbReference>
<dbReference type="Pfam" id="PF01783">
    <property type="entry name" value="Ribosomal_L32p"/>
    <property type="match status" value="1"/>
</dbReference>
<dbReference type="SUPFAM" id="SSF57829">
    <property type="entry name" value="Zn-binding ribosomal proteins"/>
    <property type="match status" value="1"/>
</dbReference>
<protein>
    <recommendedName>
        <fullName evidence="1">Large ribosomal subunit protein bL32</fullName>
    </recommendedName>
    <alternativeName>
        <fullName evidence="3">50S ribosomal protein L32</fullName>
    </alternativeName>
</protein>
<comment type="similarity">
    <text evidence="1">Belongs to the bacterial ribosomal protein bL32 family.</text>
</comment>
<gene>
    <name evidence="1" type="primary">rpmF</name>
    <name evidence="1" type="synonym">rpl32</name>
    <name type="ordered locus">PCC8801_2694</name>
</gene>
<accession>B7K5G2</accession>
<organism>
    <name type="scientific">Rippkaea orientalis (strain PCC 8801 / RF-1)</name>
    <name type="common">Cyanothece sp. (strain PCC 8801)</name>
    <dbReference type="NCBI Taxonomy" id="41431"/>
    <lineage>
        <taxon>Bacteria</taxon>
        <taxon>Bacillati</taxon>
        <taxon>Cyanobacteriota</taxon>
        <taxon>Cyanophyceae</taxon>
        <taxon>Oscillatoriophycideae</taxon>
        <taxon>Chroococcales</taxon>
        <taxon>Aphanothecaceae</taxon>
        <taxon>Rippkaea</taxon>
        <taxon>Rippkaea orientalis</taxon>
    </lineage>
</organism>
<feature type="chain" id="PRO_1000120112" description="Large ribosomal subunit protein bL32">
    <location>
        <begin position="1"/>
        <end position="57"/>
    </location>
</feature>
<feature type="region of interest" description="Disordered" evidence="2">
    <location>
        <begin position="1"/>
        <end position="21"/>
    </location>
</feature>
<feature type="compositionally biased region" description="Basic residues" evidence="2">
    <location>
        <begin position="1"/>
        <end position="20"/>
    </location>
</feature>
<reference key="1">
    <citation type="journal article" date="2011" name="MBio">
        <title>Novel metabolic attributes of the genus Cyanothece, comprising a group of unicellular nitrogen-fixing Cyanobacteria.</title>
        <authorList>
            <person name="Bandyopadhyay A."/>
            <person name="Elvitigala T."/>
            <person name="Welsh E."/>
            <person name="Stockel J."/>
            <person name="Liberton M."/>
            <person name="Min H."/>
            <person name="Sherman L.A."/>
            <person name="Pakrasi H.B."/>
        </authorList>
    </citation>
    <scope>NUCLEOTIDE SEQUENCE [LARGE SCALE GENOMIC DNA]</scope>
    <source>
        <strain>PCC 8801 / RF-1</strain>
    </source>
</reference>